<geneLocation type="chloroplast"/>
<dbReference type="EMBL" id="AP009375">
    <property type="protein sequence ID" value="BAF50562.1"/>
    <property type="molecule type" value="Genomic_DNA"/>
</dbReference>
<dbReference type="RefSeq" id="YP_001123738.1">
    <property type="nucleotide sequence ID" value="NC_009274.1"/>
</dbReference>
<dbReference type="SMR" id="A4QLK7"/>
<dbReference type="GeneID" id="4964933"/>
<dbReference type="GO" id="GO:0009535">
    <property type="term" value="C:chloroplast thylakoid membrane"/>
    <property type="evidence" value="ECO:0007669"/>
    <property type="project" value="UniProtKB-SubCell"/>
</dbReference>
<dbReference type="GO" id="GO:0009055">
    <property type="term" value="F:electron transfer activity"/>
    <property type="evidence" value="ECO:0007669"/>
    <property type="project" value="UniProtKB-UniRule"/>
</dbReference>
<dbReference type="GO" id="GO:0020037">
    <property type="term" value="F:heme binding"/>
    <property type="evidence" value="ECO:0007669"/>
    <property type="project" value="InterPro"/>
</dbReference>
<dbReference type="GO" id="GO:0005506">
    <property type="term" value="F:iron ion binding"/>
    <property type="evidence" value="ECO:0007669"/>
    <property type="project" value="InterPro"/>
</dbReference>
<dbReference type="GO" id="GO:0015979">
    <property type="term" value="P:photosynthesis"/>
    <property type="evidence" value="ECO:0007669"/>
    <property type="project" value="UniProtKB-UniRule"/>
</dbReference>
<dbReference type="FunFam" id="1.20.5.700:FF:000001">
    <property type="entry name" value="Cytochrome f"/>
    <property type="match status" value="1"/>
</dbReference>
<dbReference type="FunFam" id="2.40.50.100:FF:000007">
    <property type="entry name" value="Cytochrome f"/>
    <property type="match status" value="1"/>
</dbReference>
<dbReference type="FunFam" id="2.60.40.830:FF:000001">
    <property type="entry name" value="Cytochrome f"/>
    <property type="match status" value="1"/>
</dbReference>
<dbReference type="Gene3D" id="2.40.50.100">
    <property type="match status" value="1"/>
</dbReference>
<dbReference type="Gene3D" id="2.60.40.830">
    <property type="entry name" value="Cytochrome f large domain"/>
    <property type="match status" value="1"/>
</dbReference>
<dbReference type="Gene3D" id="1.20.5.700">
    <property type="entry name" value="Single helix bin"/>
    <property type="match status" value="1"/>
</dbReference>
<dbReference type="HAMAP" id="MF_00610">
    <property type="entry name" value="Cytb6_f_cytF"/>
    <property type="match status" value="1"/>
</dbReference>
<dbReference type="InterPro" id="IPR024058">
    <property type="entry name" value="Cyt-f_TM"/>
</dbReference>
<dbReference type="InterPro" id="IPR002325">
    <property type="entry name" value="Cyt_f"/>
</dbReference>
<dbReference type="InterPro" id="IPR024094">
    <property type="entry name" value="Cyt_f_lg_dom"/>
</dbReference>
<dbReference type="InterPro" id="IPR036826">
    <property type="entry name" value="Cyt_f_lg_dom_sf"/>
</dbReference>
<dbReference type="InterPro" id="IPR011054">
    <property type="entry name" value="Rudment_hybrid_motif"/>
</dbReference>
<dbReference type="PANTHER" id="PTHR33288">
    <property type="match status" value="1"/>
</dbReference>
<dbReference type="PANTHER" id="PTHR33288:SF10">
    <property type="entry name" value="CYTOCHROME F"/>
    <property type="match status" value="1"/>
</dbReference>
<dbReference type="Pfam" id="PF01333">
    <property type="entry name" value="Apocytochr_F_C"/>
    <property type="match status" value="1"/>
</dbReference>
<dbReference type="Pfam" id="PF16639">
    <property type="entry name" value="Apocytochr_F_N"/>
    <property type="match status" value="1"/>
</dbReference>
<dbReference type="PRINTS" id="PR00610">
    <property type="entry name" value="CYTOCHROMEF"/>
</dbReference>
<dbReference type="SUPFAM" id="SSF103431">
    <property type="entry name" value="Cytochrome f subunit of the cytochrome b6f complex, transmembrane anchor"/>
    <property type="match status" value="1"/>
</dbReference>
<dbReference type="SUPFAM" id="SSF49441">
    <property type="entry name" value="Cytochrome f, large domain"/>
    <property type="match status" value="1"/>
</dbReference>
<dbReference type="SUPFAM" id="SSF51246">
    <property type="entry name" value="Rudiment single hybrid motif"/>
    <property type="match status" value="1"/>
</dbReference>
<dbReference type="PROSITE" id="PS51010">
    <property type="entry name" value="CYTF"/>
    <property type="match status" value="1"/>
</dbReference>
<proteinExistence type="inferred from homology"/>
<accession>A4QLK7</accession>
<name>CYF_LOBMA</name>
<evidence type="ECO:0000250" key="1"/>
<evidence type="ECO:0000255" key="2">
    <source>
        <dbReference type="HAMAP-Rule" id="MF_00610"/>
    </source>
</evidence>
<gene>
    <name evidence="2" type="primary">petA</name>
</gene>
<comment type="function">
    <text evidence="2">Component of the cytochrome b6-f complex, which mediates electron transfer between photosystem II (PSII) and photosystem I (PSI), cyclic electron flow around PSI, and state transitions.</text>
</comment>
<comment type="cofactor">
    <cofactor evidence="2">
        <name>heme</name>
        <dbReference type="ChEBI" id="CHEBI:30413"/>
    </cofactor>
    <text evidence="2">Binds 1 heme group covalently.</text>
</comment>
<comment type="subunit">
    <text evidence="1">The 4 large subunits of the cytochrome b6-f complex are cytochrome b6, subunit IV (17 kDa polypeptide, petD), cytochrome f and the Rieske protein, while the 4 small subunits are PetG, PetL, PetM and PetN. The complex functions as a dimer (By similarity).</text>
</comment>
<comment type="subcellular location">
    <subcellularLocation>
        <location evidence="2">Plastid</location>
        <location evidence="2">Chloroplast thylakoid membrane</location>
        <topology evidence="2">Single-pass membrane protein</topology>
    </subcellularLocation>
</comment>
<comment type="similarity">
    <text evidence="2">Belongs to the cytochrome f family.</text>
</comment>
<protein>
    <recommendedName>
        <fullName evidence="2">Cytochrome f</fullName>
    </recommendedName>
</protein>
<feature type="signal peptide" evidence="2">
    <location>
        <begin position="1"/>
        <end position="35"/>
    </location>
</feature>
<feature type="chain" id="PRO_0000342070" description="Cytochrome f">
    <location>
        <begin position="36"/>
        <end position="320"/>
    </location>
</feature>
<feature type="transmembrane region" description="Helical" evidence="2">
    <location>
        <begin position="286"/>
        <end position="306"/>
    </location>
</feature>
<feature type="binding site" description="axial binding residue" evidence="2">
    <location>
        <position position="36"/>
    </location>
    <ligand>
        <name>heme</name>
        <dbReference type="ChEBI" id="CHEBI:30413"/>
    </ligand>
    <ligandPart>
        <name>Fe</name>
        <dbReference type="ChEBI" id="CHEBI:18248"/>
    </ligandPart>
</feature>
<feature type="binding site" description="covalent" evidence="2">
    <location>
        <position position="56"/>
    </location>
    <ligand>
        <name>heme</name>
        <dbReference type="ChEBI" id="CHEBI:30413"/>
    </ligand>
</feature>
<feature type="binding site" description="covalent" evidence="2">
    <location>
        <position position="59"/>
    </location>
    <ligand>
        <name>heme</name>
        <dbReference type="ChEBI" id="CHEBI:30413"/>
    </ligand>
</feature>
<feature type="binding site" description="axial binding residue" evidence="2">
    <location>
        <position position="60"/>
    </location>
    <ligand>
        <name>heme</name>
        <dbReference type="ChEBI" id="CHEBI:30413"/>
    </ligand>
    <ligandPart>
        <name>Fe</name>
        <dbReference type="ChEBI" id="CHEBI:18248"/>
    </ligandPart>
</feature>
<organism>
    <name type="scientific">Lobularia maritima</name>
    <name type="common">Sweet alyssum</name>
    <name type="synonym">Alyssum maritimum</name>
    <dbReference type="NCBI Taxonomy" id="226051"/>
    <lineage>
        <taxon>Eukaryota</taxon>
        <taxon>Viridiplantae</taxon>
        <taxon>Streptophyta</taxon>
        <taxon>Embryophyta</taxon>
        <taxon>Tracheophyta</taxon>
        <taxon>Spermatophyta</taxon>
        <taxon>Magnoliopsida</taxon>
        <taxon>eudicotyledons</taxon>
        <taxon>Gunneridae</taxon>
        <taxon>Pentapetalae</taxon>
        <taxon>rosids</taxon>
        <taxon>malvids</taxon>
        <taxon>Brassicales</taxon>
        <taxon>Brassicaceae</taxon>
        <taxon>Anastaticeae</taxon>
        <taxon>Lobularia</taxon>
    </lineage>
</organism>
<sequence length="320" mass="35442">MQTRNTFSWIREEITRSISVLLMIYIITWASISSAYPIFAQQNYENPREATGRIVCANCHLASKPVDIEVPQAVLPDTVFEAVVKIPYDMQLKQVLANGKKGALNVGAVLILPEGFELAPPDRISPEMKEKIGNLSFQNYRPNKKNILVIGPVPGQKYSEITFPILAPDPATNKDVHFLKYPIYVGGNRGRGQIYPDGSKSNNTVYNATAGGIINKILRKEKGGYEITIVDASNERQVIDIIPRGLELLVSEGESIKLDQPLTSNPNVGGFGQGDAEIVLQDPLRVQGLLFFLGSVVLAQIFLVLKKKQFEKVQLSEMNF</sequence>
<keyword id="KW-0150">Chloroplast</keyword>
<keyword id="KW-0249">Electron transport</keyword>
<keyword id="KW-0349">Heme</keyword>
<keyword id="KW-0408">Iron</keyword>
<keyword id="KW-0472">Membrane</keyword>
<keyword id="KW-0479">Metal-binding</keyword>
<keyword id="KW-0602">Photosynthesis</keyword>
<keyword id="KW-0934">Plastid</keyword>
<keyword id="KW-0732">Signal</keyword>
<keyword id="KW-0793">Thylakoid</keyword>
<keyword id="KW-0812">Transmembrane</keyword>
<keyword id="KW-1133">Transmembrane helix</keyword>
<keyword id="KW-0813">Transport</keyword>
<reference key="1">
    <citation type="submission" date="2007-03" db="EMBL/GenBank/DDBJ databases">
        <title>Sequencing analysis of Lobularia maritima chloroplast DNA.</title>
        <authorList>
            <person name="Hosouchi T."/>
            <person name="Tsuruoka H."/>
            <person name="Kotani H."/>
        </authorList>
    </citation>
    <scope>NUCLEOTIDE SEQUENCE [LARGE SCALE GENOMIC DNA]</scope>
</reference>